<sequence length="946" mass="108363">MKPLSSPLQQYWQTVVERLPEPLAEKSLSTQAKSVLTFSDFVQDSVIAHPEWLTELESQSPQADEWQHYAAWLQEALSNVSDEAGLMRELRLFRRRIMVRIAWAQTLALVTEESILQQLSHLAETLIVAARDWLYDACCREWGTPCNAQGEAQPLLILGMGKLGGGELNFSSDIDLIFAWPEHGCTQGGRRELDNAQFFTRMGQRLIKVLDQPTQDGFVYRVDMRLRPFGESGPLVLSFAALEDYYQEQGRDWERYAMVKARIMGDSEGVYANELRAMLRPFVFRRYIDFSVIQSLRNMKGMIAREVRRRGLTDNIKLGAGGIREIEFIVQVFQLIRGGREPSLQSRSLLPTLSVIAALHLLSENDAEQLRVAYLFLRRLENLLQSINDEQTQTLPSDELNRARLAWAMDFADWPQLTGALTAHMTNVRRVFNELIGDDESETQEESLSEQWRELWQDALQEDDTTPVLAHLSEDDRKQVLTLIADFRKELDKRTIGPRGRQVLDHLMPHLLSDVCAREDAAVTLSRITALLVGIVTRTTYLELLSEFPAALKHLISLCAASPMIASQLARYPLLLDELLDPNTLYQPTATDAYRDELRQYLLRVPEDDEEQQLEALRQFKQAQLLRIAAADIAGTLPVMKVSDHLTWLAEAMIDAVVQQAWVQMVARYGKPNHLNDREGRGFAVVGYGKLGGWELGYSSDLDLIFLHDCPMDAMTDGEREIDGRQFYLRLAQRIMHLFNTRTSSGILYEVDARLRPSGAAGMLVTSAEAFADYQKNEAWTWEHQALVRARVVYGDPQLTAHFDAVRREIMTLPREGKTLQTEVREMREKMRAHLGNKHRNRFDIKADEGGITDIEFITQYLVLRYAHEKPKLTRWSDNVRILELLAQNDIMEEQEAMALTRAYTTLRDELHHLALQELPGHVSEDCFTAERDLVRASWQKWLVEE</sequence>
<dbReference type="EC" id="2.7.7.89" evidence="1"/>
<dbReference type="EC" id="2.7.7.42" evidence="1"/>
<dbReference type="EMBL" id="CP001063">
    <property type="protein sequence ID" value="ACD07496.1"/>
    <property type="molecule type" value="Genomic_DNA"/>
</dbReference>
<dbReference type="RefSeq" id="WP_012421356.1">
    <property type="nucleotide sequence ID" value="NC_010658.1"/>
</dbReference>
<dbReference type="SMR" id="B2U1F8"/>
<dbReference type="STRING" id="344609.SbBS512_E3484"/>
<dbReference type="KEGG" id="sbc:SbBS512_E3484"/>
<dbReference type="HOGENOM" id="CLU_006233_0_1_6"/>
<dbReference type="Proteomes" id="UP000001030">
    <property type="component" value="Chromosome"/>
</dbReference>
<dbReference type="GO" id="GO:0005829">
    <property type="term" value="C:cytosol"/>
    <property type="evidence" value="ECO:0007669"/>
    <property type="project" value="TreeGrafter"/>
</dbReference>
<dbReference type="GO" id="GO:0008882">
    <property type="term" value="F:[glutamate-ammonia-ligase] adenylyltransferase activity"/>
    <property type="evidence" value="ECO:0007669"/>
    <property type="project" value="UniProtKB-UniRule"/>
</dbReference>
<dbReference type="GO" id="GO:0047388">
    <property type="term" value="F:[glutamine synthetase]-adenylyl-L-tyrosine phosphorylase activity"/>
    <property type="evidence" value="ECO:0007669"/>
    <property type="project" value="UniProtKB-EC"/>
</dbReference>
<dbReference type="GO" id="GO:0005524">
    <property type="term" value="F:ATP binding"/>
    <property type="evidence" value="ECO:0007669"/>
    <property type="project" value="UniProtKB-UniRule"/>
</dbReference>
<dbReference type="GO" id="GO:0000287">
    <property type="term" value="F:magnesium ion binding"/>
    <property type="evidence" value="ECO:0007669"/>
    <property type="project" value="UniProtKB-UniRule"/>
</dbReference>
<dbReference type="GO" id="GO:0000820">
    <property type="term" value="P:regulation of glutamine family amino acid metabolic process"/>
    <property type="evidence" value="ECO:0007669"/>
    <property type="project" value="UniProtKB-UniRule"/>
</dbReference>
<dbReference type="CDD" id="cd05401">
    <property type="entry name" value="NT_GlnE_GlnD_like"/>
    <property type="match status" value="2"/>
</dbReference>
<dbReference type="FunFam" id="1.10.4050.10:FF:000001">
    <property type="entry name" value="Bifunctional glutamine synthetase adenylyltransferase/adenylyl-removing enzyme"/>
    <property type="match status" value="1"/>
</dbReference>
<dbReference type="FunFam" id="1.20.120.1510:FF:000001">
    <property type="entry name" value="Bifunctional glutamine synthetase adenylyltransferase/adenylyl-removing enzyme"/>
    <property type="match status" value="1"/>
</dbReference>
<dbReference type="FunFam" id="1.20.120.330:FF:000005">
    <property type="entry name" value="Bifunctional glutamine synthetase adenylyltransferase/adenylyl-removing enzyme"/>
    <property type="match status" value="1"/>
</dbReference>
<dbReference type="FunFam" id="1.20.120.330:FF:000008">
    <property type="entry name" value="Bifunctional glutamine synthetase adenylyltransferase/adenylyl-removing enzyme"/>
    <property type="match status" value="1"/>
</dbReference>
<dbReference type="FunFam" id="3.30.460.10:FF:000009">
    <property type="entry name" value="Bifunctional glutamine synthetase adenylyltransferase/adenylyl-removing enzyme"/>
    <property type="match status" value="1"/>
</dbReference>
<dbReference type="FunFam" id="3.30.460.10:FF:000014">
    <property type="entry name" value="Bifunctional glutamine synthetase adenylyltransferase/adenylyl-removing enzyme"/>
    <property type="match status" value="1"/>
</dbReference>
<dbReference type="Gene3D" id="1.20.120.1510">
    <property type="match status" value="1"/>
</dbReference>
<dbReference type="Gene3D" id="3.30.460.10">
    <property type="entry name" value="Beta Polymerase, domain 2"/>
    <property type="match status" value="2"/>
</dbReference>
<dbReference type="Gene3D" id="1.10.4050.10">
    <property type="entry name" value="Glutamine synthase adenylyltransferase GlnE"/>
    <property type="match status" value="1"/>
</dbReference>
<dbReference type="Gene3D" id="1.20.120.330">
    <property type="entry name" value="Nucleotidyltransferases domain 2"/>
    <property type="match status" value="2"/>
</dbReference>
<dbReference type="HAMAP" id="MF_00802">
    <property type="entry name" value="GlnE"/>
    <property type="match status" value="1"/>
</dbReference>
<dbReference type="InterPro" id="IPR023057">
    <property type="entry name" value="GlnE"/>
</dbReference>
<dbReference type="InterPro" id="IPR005190">
    <property type="entry name" value="GlnE_rpt_dom"/>
</dbReference>
<dbReference type="InterPro" id="IPR043519">
    <property type="entry name" value="NT_sf"/>
</dbReference>
<dbReference type="InterPro" id="IPR013546">
    <property type="entry name" value="PII_UdlTrfase/GS_AdlTrfase"/>
</dbReference>
<dbReference type="NCBIfam" id="NF008292">
    <property type="entry name" value="PRK11072.1"/>
    <property type="match status" value="1"/>
</dbReference>
<dbReference type="PANTHER" id="PTHR30621:SF0">
    <property type="entry name" value="BIFUNCTIONAL GLUTAMINE SYNTHETASE ADENYLYLTRANSFERASE_ADENYLYL-REMOVING ENZYME"/>
    <property type="match status" value="1"/>
</dbReference>
<dbReference type="PANTHER" id="PTHR30621">
    <property type="entry name" value="GLUTAMINE SYNTHETASE ADENYLYLTRANSFERASE"/>
    <property type="match status" value="1"/>
</dbReference>
<dbReference type="Pfam" id="PF08335">
    <property type="entry name" value="GlnD_UR_UTase"/>
    <property type="match status" value="2"/>
</dbReference>
<dbReference type="Pfam" id="PF03710">
    <property type="entry name" value="GlnE"/>
    <property type="match status" value="2"/>
</dbReference>
<dbReference type="SUPFAM" id="SSF81301">
    <property type="entry name" value="Nucleotidyltransferase"/>
    <property type="match status" value="2"/>
</dbReference>
<dbReference type="SUPFAM" id="SSF81593">
    <property type="entry name" value="Nucleotidyltransferase substrate binding subunit/domain"/>
    <property type="match status" value="2"/>
</dbReference>
<keyword id="KW-0067">ATP-binding</keyword>
<keyword id="KW-0460">Magnesium</keyword>
<keyword id="KW-0511">Multifunctional enzyme</keyword>
<keyword id="KW-0547">Nucleotide-binding</keyword>
<keyword id="KW-0548">Nucleotidyltransferase</keyword>
<keyword id="KW-1185">Reference proteome</keyword>
<keyword id="KW-0808">Transferase</keyword>
<name>GLNE_SHIB3</name>
<comment type="function">
    <text evidence="1">Involved in the regulation of glutamine synthetase GlnA, a key enzyme in the process to assimilate ammonia. When cellular nitrogen levels are high, the C-terminal adenylyl transferase (AT) inactivates GlnA by covalent transfer of an adenylyl group from ATP to specific tyrosine residue of GlnA, thus reducing its activity. Conversely, when nitrogen levels are low, the N-terminal adenylyl removase (AR) activates GlnA by removing the adenylyl group by phosphorolysis, increasing its activity. The regulatory region of GlnE binds the signal transduction protein PII (GlnB) which indicates the nitrogen status of the cell.</text>
</comment>
<comment type="catalytic activity">
    <reaction evidence="1">
        <text>[glutamine synthetase]-O(4)-(5'-adenylyl)-L-tyrosine + phosphate = [glutamine synthetase]-L-tyrosine + ADP</text>
        <dbReference type="Rhea" id="RHEA:43716"/>
        <dbReference type="Rhea" id="RHEA-COMP:10660"/>
        <dbReference type="Rhea" id="RHEA-COMP:10661"/>
        <dbReference type="ChEBI" id="CHEBI:43474"/>
        <dbReference type="ChEBI" id="CHEBI:46858"/>
        <dbReference type="ChEBI" id="CHEBI:83624"/>
        <dbReference type="ChEBI" id="CHEBI:456216"/>
        <dbReference type="EC" id="2.7.7.89"/>
    </reaction>
</comment>
<comment type="catalytic activity">
    <reaction evidence="1">
        <text>[glutamine synthetase]-L-tyrosine + ATP = [glutamine synthetase]-O(4)-(5'-adenylyl)-L-tyrosine + diphosphate</text>
        <dbReference type="Rhea" id="RHEA:18589"/>
        <dbReference type="Rhea" id="RHEA-COMP:10660"/>
        <dbReference type="Rhea" id="RHEA-COMP:10661"/>
        <dbReference type="ChEBI" id="CHEBI:30616"/>
        <dbReference type="ChEBI" id="CHEBI:33019"/>
        <dbReference type="ChEBI" id="CHEBI:46858"/>
        <dbReference type="ChEBI" id="CHEBI:83624"/>
        <dbReference type="EC" id="2.7.7.42"/>
    </reaction>
</comment>
<comment type="cofactor">
    <cofactor evidence="1">
        <name>Mg(2+)</name>
        <dbReference type="ChEBI" id="CHEBI:18420"/>
    </cofactor>
</comment>
<comment type="similarity">
    <text evidence="1">Belongs to the GlnE family.</text>
</comment>
<reference key="1">
    <citation type="submission" date="2008-05" db="EMBL/GenBank/DDBJ databases">
        <title>Complete sequence of Shigella boydii serotype 18 strain BS512.</title>
        <authorList>
            <person name="Rasko D.A."/>
            <person name="Rosovitz M."/>
            <person name="Maurelli A.T."/>
            <person name="Myers G."/>
            <person name="Seshadri R."/>
            <person name="Cer R."/>
            <person name="Jiang L."/>
            <person name="Ravel J."/>
            <person name="Sebastian Y."/>
        </authorList>
    </citation>
    <scope>NUCLEOTIDE SEQUENCE [LARGE SCALE GENOMIC DNA]</scope>
    <source>
        <strain>CDC 3083-94 / BS512</strain>
    </source>
</reference>
<feature type="chain" id="PRO_1000133923" description="Bifunctional glutamine synthetase adenylyltransferase/adenylyl-removing enzyme">
    <location>
        <begin position="1"/>
        <end position="946"/>
    </location>
</feature>
<feature type="region of interest" description="Adenylyl removase" evidence="1">
    <location>
        <begin position="1"/>
        <end position="440"/>
    </location>
</feature>
<feature type="region of interest" description="Adenylyl transferase" evidence="1">
    <location>
        <begin position="449"/>
        <end position="946"/>
    </location>
</feature>
<organism>
    <name type="scientific">Shigella boydii serotype 18 (strain CDC 3083-94 / BS512)</name>
    <dbReference type="NCBI Taxonomy" id="344609"/>
    <lineage>
        <taxon>Bacteria</taxon>
        <taxon>Pseudomonadati</taxon>
        <taxon>Pseudomonadota</taxon>
        <taxon>Gammaproteobacteria</taxon>
        <taxon>Enterobacterales</taxon>
        <taxon>Enterobacteriaceae</taxon>
        <taxon>Shigella</taxon>
    </lineage>
</organism>
<evidence type="ECO:0000255" key="1">
    <source>
        <dbReference type="HAMAP-Rule" id="MF_00802"/>
    </source>
</evidence>
<protein>
    <recommendedName>
        <fullName evidence="1">Bifunctional glutamine synthetase adenylyltransferase/adenylyl-removing enzyme</fullName>
    </recommendedName>
    <alternativeName>
        <fullName evidence="1">ATP:glutamine synthetase adenylyltransferase</fullName>
    </alternativeName>
    <alternativeName>
        <fullName evidence="1">ATase</fullName>
    </alternativeName>
    <domain>
        <recommendedName>
            <fullName evidence="1">Glutamine synthetase adenylyl-L-tyrosine phosphorylase</fullName>
            <ecNumber evidence="1">2.7.7.89</ecNumber>
        </recommendedName>
        <alternativeName>
            <fullName evidence="1">Adenylyl removase</fullName>
            <shortName evidence="1">AR</shortName>
            <shortName evidence="1">AT-N</shortName>
        </alternativeName>
    </domain>
    <domain>
        <recommendedName>
            <fullName evidence="1">Glutamine synthetase adenylyl transferase</fullName>
            <ecNumber evidence="1">2.7.7.42</ecNumber>
        </recommendedName>
        <alternativeName>
            <fullName evidence="1">Adenylyl transferase</fullName>
            <shortName evidence="1">AT</shortName>
            <shortName evidence="1">AT-C</shortName>
        </alternativeName>
    </domain>
</protein>
<gene>
    <name evidence="1" type="primary">glnE</name>
    <name type="ordered locus">SbBS512_E3484</name>
</gene>
<proteinExistence type="inferred from homology"/>
<accession>B2U1F8</accession>